<name>YDFC_ECOLI</name>
<gene>
    <name type="primary">ydfC</name>
    <name type="synonym">rzpQ</name>
    <name type="ordered locus">b1573</name>
    <name type="ordered locus">JW1565</name>
</gene>
<dbReference type="EMBL" id="X07465">
    <property type="status" value="NOT_ANNOTATED_CDS"/>
    <property type="molecule type" value="Genomic_DNA"/>
</dbReference>
<dbReference type="EMBL" id="U00096">
    <property type="protein sequence ID" value="AAC74646.1"/>
    <property type="molecule type" value="Genomic_DNA"/>
</dbReference>
<dbReference type="EMBL" id="AP009048">
    <property type="protein sequence ID" value="BAA15278.1"/>
    <property type="molecule type" value="Genomic_DNA"/>
</dbReference>
<dbReference type="PIR" id="D30383">
    <property type="entry name" value="Q4ECD8"/>
</dbReference>
<dbReference type="RefSeq" id="NP_416091.1">
    <property type="nucleotide sequence ID" value="NC_000913.3"/>
</dbReference>
<dbReference type="RefSeq" id="WP_001171942.1">
    <property type="nucleotide sequence ID" value="NZ_LN832404.1"/>
</dbReference>
<dbReference type="SMR" id="P21418"/>
<dbReference type="BioGRID" id="4263288">
    <property type="interactions" value="9"/>
</dbReference>
<dbReference type="FunCoup" id="P21418">
    <property type="interactions" value="13"/>
</dbReference>
<dbReference type="STRING" id="511145.b1573"/>
<dbReference type="PaxDb" id="511145-b1573"/>
<dbReference type="EnsemblBacteria" id="AAC74646">
    <property type="protein sequence ID" value="AAC74646"/>
    <property type="gene ID" value="b1573"/>
</dbReference>
<dbReference type="GeneID" id="946107"/>
<dbReference type="KEGG" id="ecj:JW1565"/>
<dbReference type="KEGG" id="eco:b1573"/>
<dbReference type="KEGG" id="ecoc:C3026_09060"/>
<dbReference type="PATRIC" id="fig|511145.12.peg.1643"/>
<dbReference type="EchoBASE" id="EB1279"/>
<dbReference type="eggNOG" id="ENOG5031KTH">
    <property type="taxonomic scope" value="Bacteria"/>
</dbReference>
<dbReference type="HOGENOM" id="CLU_196655_0_0_6"/>
<dbReference type="InParanoid" id="P21418"/>
<dbReference type="OMA" id="CEMHKTE"/>
<dbReference type="OrthoDB" id="6571492at2"/>
<dbReference type="BioCyc" id="EcoCyc:EG11302-MONOMER"/>
<dbReference type="PRO" id="PR:P21418"/>
<dbReference type="Proteomes" id="UP000000625">
    <property type="component" value="Chromosome"/>
</dbReference>
<sequence length="72" mass="8350">MQKREPVIIAPDYTDDELYEWMRQKINAAQDLKWANEARAKQAENLSALEQDITNLEKAAALSIARMITYPR</sequence>
<organism>
    <name type="scientific">Escherichia coli (strain K12)</name>
    <dbReference type="NCBI Taxonomy" id="83333"/>
    <lineage>
        <taxon>Bacteria</taxon>
        <taxon>Pseudomonadati</taxon>
        <taxon>Pseudomonadota</taxon>
        <taxon>Gammaproteobacteria</taxon>
        <taxon>Enterobacterales</taxon>
        <taxon>Enterobacteriaceae</taxon>
        <taxon>Escherichia</taxon>
    </lineage>
</organism>
<feature type="chain" id="PRO_0000168954" description="Uncharacterized protein YdfC">
    <location>
        <begin position="1"/>
        <end position="72"/>
    </location>
</feature>
<protein>
    <recommendedName>
        <fullName>Uncharacterized protein YdfC</fullName>
    </recommendedName>
</protein>
<accession>P21418</accession>
<keyword id="KW-1185">Reference proteome</keyword>
<proteinExistence type="predicted"/>
<reference key="1">
    <citation type="journal article" date="1988" name="Nucleic Acids Res.">
        <title>Identification and sequence of gene dicB: translation of the division inhibitor from an in-phase internal start.</title>
        <authorList>
            <person name="Cam K."/>
            <person name="Bejar S."/>
            <person name="Gil D."/>
            <person name="Bouche J.-P."/>
        </authorList>
    </citation>
    <scope>NUCLEOTIDE SEQUENCE [GENOMIC DNA]</scope>
</reference>
<reference key="2">
    <citation type="journal article" date="1996" name="DNA Res.">
        <title>A 570-kb DNA sequence of the Escherichia coli K-12 genome corresponding to the 28.0-40.1 min region on the linkage map.</title>
        <authorList>
            <person name="Aiba H."/>
            <person name="Baba T."/>
            <person name="Fujita K."/>
            <person name="Hayashi K."/>
            <person name="Inada T."/>
            <person name="Isono K."/>
            <person name="Itoh T."/>
            <person name="Kasai H."/>
            <person name="Kashimoto K."/>
            <person name="Kimura S."/>
            <person name="Kitakawa M."/>
            <person name="Kitagawa M."/>
            <person name="Makino K."/>
            <person name="Miki T."/>
            <person name="Mizobuchi K."/>
            <person name="Mori H."/>
            <person name="Mori T."/>
            <person name="Motomura K."/>
            <person name="Nakade S."/>
            <person name="Nakamura Y."/>
            <person name="Nashimoto H."/>
            <person name="Nishio Y."/>
            <person name="Oshima T."/>
            <person name="Saito N."/>
            <person name="Sampei G."/>
            <person name="Seki Y."/>
            <person name="Sivasundaram S."/>
            <person name="Tagami H."/>
            <person name="Takeda J."/>
            <person name="Takemoto K."/>
            <person name="Takeuchi Y."/>
            <person name="Wada C."/>
            <person name="Yamamoto Y."/>
            <person name="Horiuchi T."/>
        </authorList>
    </citation>
    <scope>NUCLEOTIDE SEQUENCE [LARGE SCALE GENOMIC DNA]</scope>
    <source>
        <strain>K12 / W3110 / ATCC 27325 / DSM 5911</strain>
    </source>
</reference>
<reference key="3">
    <citation type="journal article" date="1997" name="Science">
        <title>The complete genome sequence of Escherichia coli K-12.</title>
        <authorList>
            <person name="Blattner F.R."/>
            <person name="Plunkett G. III"/>
            <person name="Bloch C.A."/>
            <person name="Perna N.T."/>
            <person name="Burland V."/>
            <person name="Riley M."/>
            <person name="Collado-Vides J."/>
            <person name="Glasner J.D."/>
            <person name="Rode C.K."/>
            <person name="Mayhew G.F."/>
            <person name="Gregor J."/>
            <person name="Davis N.W."/>
            <person name="Kirkpatrick H.A."/>
            <person name="Goeden M.A."/>
            <person name="Rose D.J."/>
            <person name="Mau B."/>
            <person name="Shao Y."/>
        </authorList>
    </citation>
    <scope>NUCLEOTIDE SEQUENCE [LARGE SCALE GENOMIC DNA]</scope>
    <source>
        <strain>K12 / MG1655 / ATCC 47076</strain>
    </source>
</reference>
<reference key="4">
    <citation type="journal article" date="2006" name="Mol. Syst. Biol.">
        <title>Highly accurate genome sequences of Escherichia coli K-12 strains MG1655 and W3110.</title>
        <authorList>
            <person name="Hayashi K."/>
            <person name="Morooka N."/>
            <person name="Yamamoto Y."/>
            <person name="Fujita K."/>
            <person name="Isono K."/>
            <person name="Choi S."/>
            <person name="Ohtsubo E."/>
            <person name="Baba T."/>
            <person name="Wanner B.L."/>
            <person name="Mori H."/>
            <person name="Horiuchi T."/>
        </authorList>
    </citation>
    <scope>NUCLEOTIDE SEQUENCE [LARGE SCALE GENOMIC DNA]</scope>
    <source>
        <strain>K12 / W3110 / ATCC 27325 / DSM 5911</strain>
    </source>
</reference>